<dbReference type="EC" id="2.7.1.161" evidence="1"/>
<dbReference type="EMBL" id="CP000077">
    <property type="protein sequence ID" value="AAY80667.1"/>
    <property type="molecule type" value="Genomic_DNA"/>
</dbReference>
<dbReference type="SMR" id="Q4J963"/>
<dbReference type="STRING" id="330779.Saci_1332"/>
<dbReference type="KEGG" id="sai:Saci_1332"/>
<dbReference type="PATRIC" id="fig|330779.12.peg.1285"/>
<dbReference type="eggNOG" id="arCOG01904">
    <property type="taxonomic scope" value="Archaea"/>
</dbReference>
<dbReference type="HOGENOM" id="CLU_088476_0_0_2"/>
<dbReference type="UniPathway" id="UPA00276">
    <property type="reaction ID" value="UER00929"/>
</dbReference>
<dbReference type="Proteomes" id="UP000001018">
    <property type="component" value="Chromosome"/>
</dbReference>
<dbReference type="GO" id="GO:0000287">
    <property type="term" value="F:magnesium ion binding"/>
    <property type="evidence" value="ECO:0007669"/>
    <property type="project" value="UniProtKB-UniRule"/>
</dbReference>
<dbReference type="GO" id="GO:0000166">
    <property type="term" value="F:nucleotide binding"/>
    <property type="evidence" value="ECO:0007669"/>
    <property type="project" value="UniProtKB-UniRule"/>
</dbReference>
<dbReference type="GO" id="GO:0008531">
    <property type="term" value="F:riboflavin kinase activity"/>
    <property type="evidence" value="ECO:0007669"/>
    <property type="project" value="InterPro"/>
</dbReference>
<dbReference type="GO" id="GO:0009398">
    <property type="term" value="P:FMN biosynthetic process"/>
    <property type="evidence" value="ECO:0007669"/>
    <property type="project" value="UniProtKB-UniRule"/>
</dbReference>
<dbReference type="GO" id="GO:0009231">
    <property type="term" value="P:riboflavin biosynthetic process"/>
    <property type="evidence" value="ECO:0007669"/>
    <property type="project" value="InterPro"/>
</dbReference>
<dbReference type="Gene3D" id="2.40.30.30">
    <property type="entry name" value="Riboflavin kinase-like"/>
    <property type="match status" value="1"/>
</dbReference>
<dbReference type="HAMAP" id="MF_01285">
    <property type="entry name" value="Riboflavin_kinase"/>
    <property type="match status" value="1"/>
</dbReference>
<dbReference type="InterPro" id="IPR039063">
    <property type="entry name" value="RibK_CTP-dep"/>
</dbReference>
<dbReference type="InterPro" id="IPR023470">
    <property type="entry name" value="Riboflavin_kinase_archaeal"/>
</dbReference>
<dbReference type="InterPro" id="IPR023602">
    <property type="entry name" value="Riboflavin_kinase_CTP-dep"/>
</dbReference>
<dbReference type="InterPro" id="IPR023465">
    <property type="entry name" value="Riboflavin_kinase_dom_sf"/>
</dbReference>
<dbReference type="PANTHER" id="PTHR40706">
    <property type="entry name" value="RIBOFLAVIN KINASE"/>
    <property type="match status" value="1"/>
</dbReference>
<dbReference type="PANTHER" id="PTHR40706:SF1">
    <property type="entry name" value="RIBOFLAVIN KINASE"/>
    <property type="match status" value="1"/>
</dbReference>
<dbReference type="Pfam" id="PF01982">
    <property type="entry name" value="CTP-dep_RFKase"/>
    <property type="match status" value="1"/>
</dbReference>
<dbReference type="SUPFAM" id="SSF82114">
    <property type="entry name" value="Riboflavin kinase-like"/>
    <property type="match status" value="1"/>
</dbReference>
<accession>Q4J963</accession>
<organism>
    <name type="scientific">Sulfolobus acidocaldarius (strain ATCC 33909 / DSM 639 / JCM 8929 / NBRC 15157 / NCIMB 11770)</name>
    <dbReference type="NCBI Taxonomy" id="330779"/>
    <lineage>
        <taxon>Archaea</taxon>
        <taxon>Thermoproteota</taxon>
        <taxon>Thermoprotei</taxon>
        <taxon>Sulfolobales</taxon>
        <taxon>Sulfolobaceae</taxon>
        <taxon>Sulfolobus</taxon>
    </lineage>
</organism>
<sequence length="159" mass="17896">MIKLTDEGEKMLRECAESLVDLFAKNRIVKIKAKVTSGLGEGRIFVSLPYYMEAFNKFLGFQPYPGTLNAVIYDRISMENRLLLDLSRGILIPEHKEPNRVLGSVKAFPASINSVSPVAVVIPTRTTHPKSVVELLSPHKLREKLELEDGDEIEIEVYL</sequence>
<comment type="function">
    <text evidence="1">Catalyzes the CTP-dependent phosphorylation of riboflavin (vitamin B2) to form flavin mononucleotide (FMN).</text>
</comment>
<comment type="catalytic activity">
    <reaction evidence="1">
        <text>riboflavin + CTP = CDP + FMN + H(+)</text>
        <dbReference type="Rhea" id="RHEA:25021"/>
        <dbReference type="ChEBI" id="CHEBI:15378"/>
        <dbReference type="ChEBI" id="CHEBI:37563"/>
        <dbReference type="ChEBI" id="CHEBI:57986"/>
        <dbReference type="ChEBI" id="CHEBI:58069"/>
        <dbReference type="ChEBI" id="CHEBI:58210"/>
        <dbReference type="EC" id="2.7.1.161"/>
    </reaction>
</comment>
<comment type="cofactor">
    <cofactor evidence="1">
        <name>Mg(2+)</name>
        <dbReference type="ChEBI" id="CHEBI:18420"/>
    </cofactor>
    <text evidence="1">Binds 1 Mg(2+) ion per subunit.</text>
</comment>
<comment type="pathway">
    <text evidence="1">Cofactor biosynthesis; FMN biosynthesis; FMN from riboflavin (CTP route): step 1/1.</text>
</comment>
<comment type="similarity">
    <text evidence="1">Belongs to the archaeal riboflavin kinase family.</text>
</comment>
<feature type="chain" id="PRO_0000322078" description="Riboflavin kinase">
    <location>
        <begin position="1"/>
        <end position="159"/>
    </location>
</feature>
<feature type="binding site" evidence="1">
    <location>
        <begin position="38"/>
        <end position="43"/>
    </location>
    <ligand>
        <name>CDP</name>
        <dbReference type="ChEBI" id="CHEBI:58069"/>
    </ligand>
</feature>
<feature type="binding site" evidence="1">
    <location>
        <position position="67"/>
    </location>
    <ligand>
        <name>Mg(2+)</name>
        <dbReference type="ChEBI" id="CHEBI:18420"/>
    </ligand>
</feature>
<feature type="binding site" evidence="1">
    <location>
        <position position="69"/>
    </location>
    <ligand>
        <name>Mg(2+)</name>
        <dbReference type="ChEBI" id="CHEBI:18420"/>
    </ligand>
</feature>
<feature type="binding site" evidence="1">
    <location>
        <position position="126"/>
    </location>
    <ligand>
        <name>FMN</name>
        <dbReference type="ChEBI" id="CHEBI:58210"/>
    </ligand>
</feature>
<feature type="binding site" evidence="1">
    <location>
        <position position="134"/>
    </location>
    <ligand>
        <name>FMN</name>
        <dbReference type="ChEBI" id="CHEBI:58210"/>
    </ligand>
</feature>
<feature type="binding site" evidence="1">
    <location>
        <begin position="139"/>
        <end position="142"/>
    </location>
    <ligand>
        <name>CDP</name>
        <dbReference type="ChEBI" id="CHEBI:58069"/>
    </ligand>
</feature>
<name>RIFK_SULAC</name>
<evidence type="ECO:0000255" key="1">
    <source>
        <dbReference type="HAMAP-Rule" id="MF_01285"/>
    </source>
</evidence>
<protein>
    <recommendedName>
        <fullName evidence="1">Riboflavin kinase</fullName>
        <shortName evidence="1">RFK</shortName>
        <ecNumber evidence="1">2.7.1.161</ecNumber>
    </recommendedName>
    <alternativeName>
        <fullName evidence="1">CTP-dependent riboflavin kinase</fullName>
    </alternativeName>
    <alternativeName>
        <fullName evidence="1">CTP:riboflavin 5'-phosphotransferase</fullName>
    </alternativeName>
    <alternativeName>
        <fullName evidence="1">Flavokinase</fullName>
    </alternativeName>
</protein>
<gene>
    <name evidence="1" type="primary">ribK</name>
    <name type="ordered locus">Saci_1332</name>
</gene>
<keyword id="KW-0285">Flavoprotein</keyword>
<keyword id="KW-0288">FMN</keyword>
<keyword id="KW-0418">Kinase</keyword>
<keyword id="KW-0460">Magnesium</keyword>
<keyword id="KW-0479">Metal-binding</keyword>
<keyword id="KW-0547">Nucleotide-binding</keyword>
<keyword id="KW-1185">Reference proteome</keyword>
<keyword id="KW-0808">Transferase</keyword>
<proteinExistence type="inferred from homology"/>
<reference key="1">
    <citation type="journal article" date="2005" name="J. Bacteriol.">
        <title>The genome of Sulfolobus acidocaldarius, a model organism of the Crenarchaeota.</title>
        <authorList>
            <person name="Chen L."/>
            <person name="Bruegger K."/>
            <person name="Skovgaard M."/>
            <person name="Redder P."/>
            <person name="She Q."/>
            <person name="Torarinsson E."/>
            <person name="Greve B."/>
            <person name="Awayez M."/>
            <person name="Zibat A."/>
            <person name="Klenk H.-P."/>
            <person name="Garrett R.A."/>
        </authorList>
    </citation>
    <scope>NUCLEOTIDE SEQUENCE [LARGE SCALE GENOMIC DNA]</scope>
    <source>
        <strain>ATCC 33909 / DSM 639 / JCM 8929 / NBRC 15157 / NCIMB 11770</strain>
    </source>
</reference>